<comment type="function">
    <text evidence="1">Catalyzes the transfer of a phosphate group to glutamate to form L-glutamate 5-phosphate.</text>
</comment>
<comment type="catalytic activity">
    <reaction evidence="1">
        <text>L-glutamate + ATP = L-glutamyl 5-phosphate + ADP</text>
        <dbReference type="Rhea" id="RHEA:14877"/>
        <dbReference type="ChEBI" id="CHEBI:29985"/>
        <dbReference type="ChEBI" id="CHEBI:30616"/>
        <dbReference type="ChEBI" id="CHEBI:58274"/>
        <dbReference type="ChEBI" id="CHEBI:456216"/>
        <dbReference type="EC" id="2.7.2.11"/>
    </reaction>
</comment>
<comment type="pathway">
    <text evidence="1">Amino-acid biosynthesis; L-proline biosynthesis; L-glutamate 5-semialdehyde from L-glutamate: step 1/2.</text>
</comment>
<comment type="subcellular location">
    <subcellularLocation>
        <location evidence="1">Cytoplasm</location>
    </subcellularLocation>
</comment>
<comment type="similarity">
    <text evidence="1">Belongs to the glutamate 5-kinase family.</text>
</comment>
<sequence length="368" mass="39235">MTGAQRWVVKIGSALLTADGKGLDRNAMGVWVEQMAALHEAGVELVLVSSGAVAAGMSRLGWTARPSAMHELQAAAAIGQMGLVQAWESSFAEHGRHTAQILLTHDDLSDRKRYLNARSTLRTLVELGVVPVINENDTVVTDEIRFGDNDTLAALVANLVEADLLVILTDRDGMFDADPRNNPEAQLIYEARADDPALDAVAGGTGGALGRGGMQTKLRAARLAARSGAHTVIVGGRIERVLARLKGGERLGTLLSPERGMLAARKQWLAGHLQTRGTLVLDDGAVAALAKDQKSLLPVGVKLVQGSFRRGEMVVCVASDGREIARGLSNYSAIEAQKIIGHSSESIVRELGYMAEPELIHRDNLILV</sequence>
<feature type="chain" id="PRO_0000230059" description="Glutamate 5-kinase">
    <location>
        <begin position="1"/>
        <end position="368"/>
    </location>
</feature>
<feature type="domain" description="PUA" evidence="1">
    <location>
        <begin position="276"/>
        <end position="354"/>
    </location>
</feature>
<feature type="binding site" evidence="1">
    <location>
        <position position="10"/>
    </location>
    <ligand>
        <name>ATP</name>
        <dbReference type="ChEBI" id="CHEBI:30616"/>
    </ligand>
</feature>
<feature type="binding site" evidence="1">
    <location>
        <position position="50"/>
    </location>
    <ligand>
        <name>substrate</name>
    </ligand>
</feature>
<feature type="binding site" evidence="1">
    <location>
        <position position="137"/>
    </location>
    <ligand>
        <name>substrate</name>
    </ligand>
</feature>
<feature type="binding site" evidence="1">
    <location>
        <position position="149"/>
    </location>
    <ligand>
        <name>substrate</name>
    </ligand>
</feature>
<feature type="binding site" evidence="1">
    <location>
        <begin position="169"/>
        <end position="170"/>
    </location>
    <ligand>
        <name>ATP</name>
        <dbReference type="ChEBI" id="CHEBI:30616"/>
    </ligand>
</feature>
<proteinExistence type="inferred from homology"/>
<reference key="1">
    <citation type="journal article" date="2005" name="J. Bacteriol.">
        <title>Whole-genome sequence analysis of Pseudomonas syringae pv. phaseolicola 1448A reveals divergence among pathovars in genes involved in virulence and transposition.</title>
        <authorList>
            <person name="Joardar V."/>
            <person name="Lindeberg M."/>
            <person name="Jackson R.W."/>
            <person name="Selengut J."/>
            <person name="Dodson R."/>
            <person name="Brinkac L.M."/>
            <person name="Daugherty S.C."/>
            <person name="DeBoy R.T."/>
            <person name="Durkin A.S."/>
            <person name="Gwinn Giglio M."/>
            <person name="Madupu R."/>
            <person name="Nelson W.C."/>
            <person name="Rosovitz M.J."/>
            <person name="Sullivan S.A."/>
            <person name="Crabtree J."/>
            <person name="Creasy T."/>
            <person name="Davidsen T.M."/>
            <person name="Haft D.H."/>
            <person name="Zafar N."/>
            <person name="Zhou L."/>
            <person name="Halpin R."/>
            <person name="Holley T."/>
            <person name="Khouri H.M."/>
            <person name="Feldblyum T.V."/>
            <person name="White O."/>
            <person name="Fraser C.M."/>
            <person name="Chatterjee A.K."/>
            <person name="Cartinhour S."/>
            <person name="Schneider D."/>
            <person name="Mansfield J.W."/>
            <person name="Collmer A."/>
            <person name="Buell R."/>
        </authorList>
    </citation>
    <scope>NUCLEOTIDE SEQUENCE [LARGE SCALE GENOMIC DNA]</scope>
    <source>
        <strain>1448A / Race 6</strain>
    </source>
</reference>
<gene>
    <name evidence="1" type="primary">proB</name>
    <name type="ordered locus">PSPPH_0716</name>
</gene>
<protein>
    <recommendedName>
        <fullName evidence="1">Glutamate 5-kinase</fullName>
        <ecNumber evidence="1">2.7.2.11</ecNumber>
    </recommendedName>
    <alternativeName>
        <fullName evidence="1">Gamma-glutamyl kinase</fullName>
        <shortName evidence="1">GK</shortName>
    </alternativeName>
</protein>
<dbReference type="EC" id="2.7.2.11" evidence="1"/>
<dbReference type="EMBL" id="CP000058">
    <property type="protein sequence ID" value="AAZ37029.1"/>
    <property type="molecule type" value="Genomic_DNA"/>
</dbReference>
<dbReference type="SMR" id="Q48NL1"/>
<dbReference type="KEGG" id="psp:PSPPH_0716"/>
<dbReference type="eggNOG" id="COG0263">
    <property type="taxonomic scope" value="Bacteria"/>
</dbReference>
<dbReference type="HOGENOM" id="CLU_025400_2_0_6"/>
<dbReference type="UniPathway" id="UPA00098">
    <property type="reaction ID" value="UER00359"/>
</dbReference>
<dbReference type="Proteomes" id="UP000000551">
    <property type="component" value="Chromosome"/>
</dbReference>
<dbReference type="GO" id="GO:0005829">
    <property type="term" value="C:cytosol"/>
    <property type="evidence" value="ECO:0007669"/>
    <property type="project" value="TreeGrafter"/>
</dbReference>
<dbReference type="GO" id="GO:0005524">
    <property type="term" value="F:ATP binding"/>
    <property type="evidence" value="ECO:0007669"/>
    <property type="project" value="UniProtKB-KW"/>
</dbReference>
<dbReference type="GO" id="GO:0004349">
    <property type="term" value="F:glutamate 5-kinase activity"/>
    <property type="evidence" value="ECO:0007669"/>
    <property type="project" value="UniProtKB-UniRule"/>
</dbReference>
<dbReference type="GO" id="GO:0003723">
    <property type="term" value="F:RNA binding"/>
    <property type="evidence" value="ECO:0007669"/>
    <property type="project" value="InterPro"/>
</dbReference>
<dbReference type="GO" id="GO:0055129">
    <property type="term" value="P:L-proline biosynthetic process"/>
    <property type="evidence" value="ECO:0007669"/>
    <property type="project" value="UniProtKB-UniRule"/>
</dbReference>
<dbReference type="CDD" id="cd04242">
    <property type="entry name" value="AAK_G5K_ProB"/>
    <property type="match status" value="1"/>
</dbReference>
<dbReference type="CDD" id="cd21157">
    <property type="entry name" value="PUA_G5K"/>
    <property type="match status" value="1"/>
</dbReference>
<dbReference type="FunFam" id="2.30.130.10:FF:000007">
    <property type="entry name" value="Glutamate 5-kinase"/>
    <property type="match status" value="1"/>
</dbReference>
<dbReference type="FunFam" id="3.40.1160.10:FF:000018">
    <property type="entry name" value="Glutamate 5-kinase"/>
    <property type="match status" value="1"/>
</dbReference>
<dbReference type="Gene3D" id="3.40.1160.10">
    <property type="entry name" value="Acetylglutamate kinase-like"/>
    <property type="match status" value="2"/>
</dbReference>
<dbReference type="Gene3D" id="2.30.130.10">
    <property type="entry name" value="PUA domain"/>
    <property type="match status" value="1"/>
</dbReference>
<dbReference type="HAMAP" id="MF_00456">
    <property type="entry name" value="ProB"/>
    <property type="match status" value="1"/>
</dbReference>
<dbReference type="InterPro" id="IPR036393">
    <property type="entry name" value="AceGlu_kinase-like_sf"/>
</dbReference>
<dbReference type="InterPro" id="IPR001048">
    <property type="entry name" value="Asp/Glu/Uridylate_kinase"/>
</dbReference>
<dbReference type="InterPro" id="IPR041739">
    <property type="entry name" value="G5K_ProB"/>
</dbReference>
<dbReference type="InterPro" id="IPR001057">
    <property type="entry name" value="Glu/AcGlu_kinase"/>
</dbReference>
<dbReference type="InterPro" id="IPR011529">
    <property type="entry name" value="Glu_5kinase"/>
</dbReference>
<dbReference type="InterPro" id="IPR005715">
    <property type="entry name" value="Glu_5kinase/COase_Synthase"/>
</dbReference>
<dbReference type="InterPro" id="IPR019797">
    <property type="entry name" value="Glutamate_5-kinase_CS"/>
</dbReference>
<dbReference type="InterPro" id="IPR002478">
    <property type="entry name" value="PUA"/>
</dbReference>
<dbReference type="InterPro" id="IPR015947">
    <property type="entry name" value="PUA-like_sf"/>
</dbReference>
<dbReference type="InterPro" id="IPR036974">
    <property type="entry name" value="PUA_sf"/>
</dbReference>
<dbReference type="NCBIfam" id="TIGR01027">
    <property type="entry name" value="proB"/>
    <property type="match status" value="1"/>
</dbReference>
<dbReference type="PANTHER" id="PTHR43654">
    <property type="entry name" value="GLUTAMATE 5-KINASE"/>
    <property type="match status" value="1"/>
</dbReference>
<dbReference type="PANTHER" id="PTHR43654:SF1">
    <property type="entry name" value="ISOPENTENYL PHOSPHATE KINASE"/>
    <property type="match status" value="1"/>
</dbReference>
<dbReference type="Pfam" id="PF00696">
    <property type="entry name" value="AA_kinase"/>
    <property type="match status" value="1"/>
</dbReference>
<dbReference type="Pfam" id="PF01472">
    <property type="entry name" value="PUA"/>
    <property type="match status" value="1"/>
</dbReference>
<dbReference type="PIRSF" id="PIRSF000729">
    <property type="entry name" value="GK"/>
    <property type="match status" value="1"/>
</dbReference>
<dbReference type="PRINTS" id="PR00474">
    <property type="entry name" value="GLU5KINASE"/>
</dbReference>
<dbReference type="SMART" id="SM00359">
    <property type="entry name" value="PUA"/>
    <property type="match status" value="1"/>
</dbReference>
<dbReference type="SUPFAM" id="SSF53633">
    <property type="entry name" value="Carbamate kinase-like"/>
    <property type="match status" value="1"/>
</dbReference>
<dbReference type="SUPFAM" id="SSF88697">
    <property type="entry name" value="PUA domain-like"/>
    <property type="match status" value="1"/>
</dbReference>
<dbReference type="PROSITE" id="PS00902">
    <property type="entry name" value="GLUTAMATE_5_KINASE"/>
    <property type="match status" value="1"/>
</dbReference>
<dbReference type="PROSITE" id="PS50890">
    <property type="entry name" value="PUA"/>
    <property type="match status" value="1"/>
</dbReference>
<organism>
    <name type="scientific">Pseudomonas savastanoi pv. phaseolicola (strain 1448A / Race 6)</name>
    <name type="common">Pseudomonas syringae pv. phaseolicola (strain 1448A / Race 6)</name>
    <dbReference type="NCBI Taxonomy" id="264730"/>
    <lineage>
        <taxon>Bacteria</taxon>
        <taxon>Pseudomonadati</taxon>
        <taxon>Pseudomonadota</taxon>
        <taxon>Gammaproteobacteria</taxon>
        <taxon>Pseudomonadales</taxon>
        <taxon>Pseudomonadaceae</taxon>
        <taxon>Pseudomonas</taxon>
    </lineage>
</organism>
<keyword id="KW-0028">Amino-acid biosynthesis</keyword>
<keyword id="KW-0067">ATP-binding</keyword>
<keyword id="KW-0963">Cytoplasm</keyword>
<keyword id="KW-0418">Kinase</keyword>
<keyword id="KW-0547">Nucleotide-binding</keyword>
<keyword id="KW-0641">Proline biosynthesis</keyword>
<keyword id="KW-0808">Transferase</keyword>
<name>PROB_PSE14</name>
<evidence type="ECO:0000255" key="1">
    <source>
        <dbReference type="HAMAP-Rule" id="MF_00456"/>
    </source>
</evidence>
<accession>Q48NL1</accession>